<reference key="1">
    <citation type="submission" date="2014-01" db="EMBL/GenBank/DDBJ databases">
        <title>The Genome Sequence of Enterobacter cloacae UCI 50.</title>
        <authorList>
            <consortium name="The Broad Institute Genomics Platform"/>
            <consortium name="The Broad Institute Genome Sequencing Center for Infectious Disease"/>
            <person name="Murphy C."/>
            <person name="Cosimi L."/>
            <person name="Cerqueira G."/>
            <person name="Feldgarden M."/>
            <person name="Earl A."/>
            <person name="Hung D."/>
            <person name="Onderdonk A.B."/>
            <person name="Ferraro M.J."/>
            <person name="Hooper D."/>
            <person name="Dekker J."/>
            <person name="O'Brien T."/>
            <person name="Huang S."/>
            <person name="Quan V."/>
            <person name="Ernst C."/>
            <person name="Delaney M."/>
            <person name="DuBois A."/>
            <person name="Kim D.S."/>
            <person name="Young S.K."/>
            <person name="Zeng Q."/>
            <person name="Gargeya S."/>
            <person name="Fitzgerald M."/>
            <person name="Abouelleil A."/>
            <person name="Alvarado L."/>
            <person name="Berlin A.M."/>
            <person name="Chapman S.B."/>
            <person name="Gainer-Dewar J."/>
            <person name="Goldberg J."/>
            <person name="Gnerre S."/>
            <person name="Griggs A."/>
            <person name="Gujja S."/>
            <person name="Hansen M."/>
            <person name="Howarth C."/>
            <person name="Imamovic A."/>
            <person name="Ireland A."/>
            <person name="Larimer J."/>
            <person name="McCowan C."/>
            <person name="Murphy C."/>
            <person name="Pearson M."/>
            <person name="Poon T.W."/>
            <person name="Priest M."/>
            <person name="Roberts A."/>
            <person name="Saif S."/>
            <person name="Shea T."/>
            <person name="Sykes S."/>
            <person name="Wortman J."/>
            <person name="Nusbaum C."/>
            <person name="Birren B."/>
        </authorList>
    </citation>
    <scope>NUCLEOTIDE SEQUENCE [LARGE SCALE GENOMIC DNA]</scope>
    <source>
        <strain>UCI 50</strain>
    </source>
</reference>
<reference key="2">
    <citation type="journal article" date="2020" name="Cell">
        <title>CBASS immunity uses CARF-related effectors to sense 3'-5' and 2'-5'-linked cyclic oligonucleotide signals and protect bacteria from phage infection.</title>
        <authorList>
            <person name="Lowey B."/>
            <person name="Whiteley A.T."/>
            <person name="Keszei A.F.A."/>
            <person name="Morehouse B.R."/>
            <person name="Antine S.P."/>
            <person name="Cabrera V.J."/>
            <person name="Kashin D."/>
            <person name="Schwede F."/>
            <person name="Mekalanos J.J."/>
            <person name="Shao S."/>
            <person name="Lee A.S.Y."/>
            <person name="Kranzusch P.J."/>
        </authorList>
    </citation>
    <scope>ANTIVIRAL DEFENSE</scope>
    <scope>OPERON STRUCTURE</scope>
    <source>
        <strain>UCI 50</strain>
    </source>
</reference>
<reference key="3">
    <citation type="journal article" date="2020" name="Nat. Microbiol.">
        <title>Diversity and classification of cyclic-oligonucleotide-based anti-phage signalling systems.</title>
        <authorList>
            <person name="Millman A."/>
            <person name="Melamed S."/>
            <person name="Amitai G."/>
            <person name="Sorek R."/>
        </authorList>
    </citation>
    <scope>CLASSIFICATION AND NOMENCLATURE</scope>
</reference>
<reference key="4">
    <citation type="journal article" date="2023" name="Nature">
        <title>Ubiquitin-like conjugation by bacterial cGAS enhances anti-phage defence.</title>
        <authorList>
            <person name="Jenson J.M."/>
            <person name="Li T."/>
            <person name="Du F."/>
            <person name="Ea C.K."/>
            <person name="Chen Z.J."/>
        </authorList>
    </citation>
    <scope>FUNCTION AS A PROTEIN TRANSFERASE</scope>
    <source>
        <strain>El Tor C6706</strain>
    </source>
</reference>
<reference evidence="12 13 14 15" key="5">
    <citation type="journal article" date="2023" name="Nature">
        <title>An E1-E2 fusion protein primes antiviral immune signalling in bacteria.</title>
        <authorList>
            <person name="Ledvina H.E."/>
            <person name="Ye Q."/>
            <person name="Gu Y."/>
            <person name="Sullivan A.E."/>
            <person name="Quan Y."/>
            <person name="Lau R.K."/>
            <person name="Zhou H."/>
            <person name="Corbett K.D."/>
            <person name="Whiteley A.T."/>
        </authorList>
    </citation>
    <scope>X-RAY CRYSTALLOGRAPHY (1.77 ANGSTROMS) IN COMPLEX WITH CDND</scope>
    <scope>FUNCTION AS A PROTEIN TRANSFERASE</scope>
    <scope>ANTIVIRAL DEFENSE</scope>
    <scope>SUBUNIT</scope>
    <scope>DOMAIN</scope>
    <scope>DISRUPTION PHENOTYPE</scope>
    <scope>MUTAGENESIS OF CYS-109; ARG-369; 411-ASP--ASN-417; ARG-420; ASP-479; THR-517; 546-ILE--TRP-549 AND CYS-548</scope>
</reference>
<dbReference type="EC" id="2.3.2.-" evidence="3 4"/>
<dbReference type="EMBL" id="JCKK01000002">
    <property type="protein sequence ID" value="EUL39000.1"/>
    <property type="molecule type" value="Genomic_DNA"/>
</dbReference>
<dbReference type="PDB" id="7TO3">
    <property type="method" value="EM"/>
    <property type="resolution" value="2.74 A"/>
    <property type="chains" value="A/B=1-600"/>
</dbReference>
<dbReference type="PDB" id="7TQD">
    <property type="method" value="EM"/>
    <property type="resolution" value="2.90 A"/>
    <property type="chains" value="A/B=1-600"/>
</dbReference>
<dbReference type="PDB" id="7TSQ">
    <property type="method" value="X-ray"/>
    <property type="resolution" value="2.11 A"/>
    <property type="chains" value="A/B=362-600"/>
</dbReference>
<dbReference type="PDB" id="7TSX">
    <property type="method" value="X-ray"/>
    <property type="resolution" value="1.77 A"/>
    <property type="chains" value="A/B=362-600"/>
</dbReference>
<dbReference type="PDBsum" id="7TO3"/>
<dbReference type="PDBsum" id="7TQD"/>
<dbReference type="PDBsum" id="7TSQ"/>
<dbReference type="PDBsum" id="7TSX"/>
<dbReference type="EMDB" id="EMD-26028"/>
<dbReference type="EMDB" id="EMD-26066"/>
<dbReference type="SMR" id="P0DX82"/>
<dbReference type="GO" id="GO:0016740">
    <property type="term" value="F:transferase activity"/>
    <property type="evidence" value="ECO:0007669"/>
    <property type="project" value="UniProtKB-KW"/>
</dbReference>
<dbReference type="GO" id="GO:0061503">
    <property type="term" value="F:tRNA threonylcarbamoyladenosine dehydratase"/>
    <property type="evidence" value="ECO:0007669"/>
    <property type="project" value="TreeGrafter"/>
</dbReference>
<dbReference type="GO" id="GO:0008641">
    <property type="term" value="F:ubiquitin-like modifier activating enzyme activity"/>
    <property type="evidence" value="ECO:0007669"/>
    <property type="project" value="InterPro"/>
</dbReference>
<dbReference type="GO" id="GO:0061504">
    <property type="term" value="P:cyclic threonylcarbamoyladenosine biosynthetic process"/>
    <property type="evidence" value="ECO:0007669"/>
    <property type="project" value="TreeGrafter"/>
</dbReference>
<dbReference type="GO" id="GO:0051607">
    <property type="term" value="P:defense response to virus"/>
    <property type="evidence" value="ECO:0007669"/>
    <property type="project" value="UniProtKB-KW"/>
</dbReference>
<dbReference type="CDD" id="cd01483">
    <property type="entry name" value="E1_enzyme_family"/>
    <property type="match status" value="1"/>
</dbReference>
<dbReference type="Gene3D" id="3.40.50.720">
    <property type="entry name" value="NAD(P)-binding Rossmann-like Domain"/>
    <property type="match status" value="1"/>
</dbReference>
<dbReference type="InterPro" id="IPR045886">
    <property type="entry name" value="ThiF/MoeB/HesA"/>
</dbReference>
<dbReference type="InterPro" id="IPR000594">
    <property type="entry name" value="ThiF_NAD_FAD-bd"/>
</dbReference>
<dbReference type="InterPro" id="IPR035985">
    <property type="entry name" value="Ubiquitin-activating_enz"/>
</dbReference>
<dbReference type="PANTHER" id="PTHR43267">
    <property type="entry name" value="TRNA THREONYLCARBAMOYLADENOSINE DEHYDRATASE"/>
    <property type="match status" value="1"/>
</dbReference>
<dbReference type="PANTHER" id="PTHR43267:SF1">
    <property type="entry name" value="TRNA THREONYLCARBAMOYLADENOSINE DEHYDRATASE"/>
    <property type="match status" value="1"/>
</dbReference>
<dbReference type="Pfam" id="PF00899">
    <property type="entry name" value="ThiF"/>
    <property type="match status" value="1"/>
</dbReference>
<dbReference type="SUPFAM" id="SSF69572">
    <property type="entry name" value="Activating enzymes of the ubiquitin-like proteins"/>
    <property type="match status" value="1"/>
</dbReference>
<protein>
    <recommendedName>
        <fullName evidence="7">ATP-dependent ubiquitin transferase-like protein Cap2</fullName>
        <ecNumber evidence="3 4">2.3.2.-</ecNumber>
    </recommendedName>
    <alternativeName>
        <fullName evidence="5">CD-NTase-associated protein 2</fullName>
        <shortName evidence="5">Cap2</shortName>
    </alternativeName>
</protein>
<feature type="chain" id="PRO_0000459516" description="ATP-dependent ubiquitin transferase-like protein Cap2">
    <location>
        <begin position="1"/>
        <end position="600"/>
    </location>
</feature>
<feature type="region of interest" description="E2-like domain" evidence="3">
    <location>
        <begin position="1"/>
        <end position="158"/>
    </location>
</feature>
<feature type="region of interest" description="Linker domain" evidence="3">
    <location>
        <begin position="159"/>
        <end position="373"/>
    </location>
</feature>
<feature type="region of interest" description="Adenylation plus E1-like domain" evidence="3">
    <location>
        <begin position="375"/>
        <end position="600"/>
    </location>
</feature>
<feature type="active site" description="For E2-like domain" evidence="10">
    <location>
        <position position="109"/>
    </location>
</feature>
<feature type="active site" description="For E1-like domain" evidence="10">
    <location>
        <position position="548"/>
    </location>
</feature>
<feature type="site" description="Adenylated" evidence="10">
    <location>
        <position position="420"/>
    </location>
</feature>
<feature type="mutagenesis site" description="Less efficient conjugation with CdnD. No conjugation with CdnD, proteins still co-immunoprecipitate; when associated with A-548." evidence="3">
    <original>C</original>
    <variation>A</variation>
    <location>
        <position position="109"/>
    </location>
</feature>
<feature type="mutagenesis site" description="Less efficient conjugation with CdnD." evidence="3">
    <original>R</original>
    <variation>A</variation>
    <location>
        <position position="369"/>
    </location>
</feature>
<feature type="mutagenesis site" description="Wild-type conjugation with CdnD." evidence="3">
    <original>DLLQTGN</original>
    <variation>ALLQTGA</variation>
    <location>
        <begin position="411"/>
        <end position="417"/>
    </location>
</feature>
<feature type="mutagenesis site" description="Very poor conjugation with CdnD, proteins still co-immunoprecipitate." evidence="3">
    <original>R</original>
    <variation>A</variation>
    <location>
        <position position="420"/>
    </location>
</feature>
<feature type="mutagenesis site" description="Wild-type conjugation with CdnD." evidence="3">
    <original>D</original>
    <variation>A</variation>
    <location>
        <position position="479"/>
    </location>
</feature>
<feature type="mutagenesis site" description="No change in CdnD-Cap2 interaction." evidence="3">
    <original>T</original>
    <variation>K</variation>
    <location>
        <position position="517"/>
    </location>
</feature>
<feature type="mutagenesis site" description="Wild-type conjugation with CdnD." evidence="3">
    <original>IGCW</original>
    <variation>AGCA</variation>
    <location>
        <begin position="546"/>
        <end position="549"/>
    </location>
</feature>
<feature type="mutagenesis site" description="Less efficient conjugation with CdnD. No conjugation with CdnD, proteins still co-immunoprecipitate; when associated with A-109." evidence="3">
    <original>C</original>
    <variation>A</variation>
    <location>
        <position position="548"/>
    </location>
</feature>
<accession>P0DX82</accession>
<evidence type="ECO:0000250" key="1">
    <source>
        <dbReference type="UniProtKB" id="P0DTF2"/>
    </source>
</evidence>
<evidence type="ECO:0000269" key="2">
    <source>
    </source>
</evidence>
<evidence type="ECO:0000269" key="3">
    <source>
    </source>
</evidence>
<evidence type="ECO:0000269" key="4">
    <source>
    </source>
</evidence>
<evidence type="ECO:0000303" key="5">
    <source>
    </source>
</evidence>
<evidence type="ECO:0000303" key="6">
    <source>
    </source>
</evidence>
<evidence type="ECO:0000303" key="7">
    <source>
    </source>
</evidence>
<evidence type="ECO:0000305" key="8"/>
<evidence type="ECO:0000305" key="9">
    <source>
    </source>
</evidence>
<evidence type="ECO:0000305" key="10">
    <source>
    </source>
</evidence>
<evidence type="ECO:0000312" key="11">
    <source>
        <dbReference type="EMBL" id="EUL39000.1"/>
    </source>
</evidence>
<evidence type="ECO:0007744" key="12">
    <source>
        <dbReference type="PDB" id="7TO3"/>
    </source>
</evidence>
<evidence type="ECO:0007744" key="13">
    <source>
        <dbReference type="PDB" id="7TQD"/>
    </source>
</evidence>
<evidence type="ECO:0007744" key="14">
    <source>
        <dbReference type="PDB" id="7TSQ"/>
    </source>
</evidence>
<evidence type="ECO:0007744" key="15">
    <source>
        <dbReference type="PDB" id="7TSX"/>
    </source>
</evidence>
<name>CAP2_ENTH5</name>
<organism>
    <name type="scientific">Enterobacter hormaechei subsp. hoffmannii (strain UCI 50)</name>
    <dbReference type="NCBI Taxonomy" id="1400155"/>
    <lineage>
        <taxon>Bacteria</taxon>
        <taxon>Pseudomonadati</taxon>
        <taxon>Pseudomonadota</taxon>
        <taxon>Gammaproteobacteria</taxon>
        <taxon>Enterobacterales</taxon>
        <taxon>Enterobacteriaceae</taxon>
        <taxon>Enterobacter</taxon>
        <taxon>Enterobacter cloacae complex</taxon>
    </lineage>
</organism>
<sequence>MSTVVQQVPAELQAALTLINNDPRMRTNNAWALSADKRWSLKFTAELSVPCSSFMPDNSVWHLVLWQEETLIRIEVYPDKSEGISATFQHQNYNFSDASTREWTSGNPCLENTPTVFGRNLWGLEPEALLDRISWRLSRLLLWIDAAAQEKLATTGDAVELPAFPDQSPFTVIGFSEQIDDLPFWASKTGEWGFASSTGLPGAHGTLFLREFLDNKGKLIRTTKWSPFMRKGARTTNAVWSVLPTLPVLAPWQAPRTWQELSHCFAQCGLSLPDLFSDIGRSVRALRKQRAPGLLLLGFPLENKIGDEPARIHWLALRLAGLSNTMTKRPGFRPTERNRRTWDREQPLSQEPIRWVRTQNWAADQLRTRGEAANDIRSKKVLIIGAGSLGSMIAENLMRIGVVSQGILDADLLQTGNLSRHALTMTSVGHNKAAALVEHLNRILPDASARSFSCAFPPESEVAKNSLRQYDVIIDCTGDDGVLKSLAAFDWKSEKIFISLAMTWRAEGLFAFAASETSFPVTDASSRFNASASPEIDMDEARIEGIGCWHPVFPARADDVQLWAAVGTKFICRVVSAPGRIYEYFKQMPDGTVEKEPHEY</sequence>
<comment type="function">
    <text evidence="2 3 6">CD-NTase priming component of a CBASS antiviral system (PubMed:36755092). CBASS (cyclic oligonucleotide-based antiphage signaling system) provides immunity against bacteriophages (PubMed:32544385, PubMed:36755092). The CD-NTase protein (CdnD) synthesizes cyclic nucleotides in response to infection; these serve as specific second messenger signals. The signals activate a diverse range of effectors, leading to bacterial cell death and thus abortive phage infection (PubMed:32544385, PubMed:36755092). A type II-C(AAG) CBASS system (PubMed:32839535).</text>
</comment>
<comment type="function">
    <text evidence="1 3 4">Primes CdnD; acts as a protein transferase, conjugating CdnD, the CD-NTase, to unidentified target(s) in the cell via an E1-E2 ubiquitin transferase-like mechanism (PubMed:36755092, PubMed:36848932). Upon phage infection CdnD activates and makes cyclic nucleotides (PubMed:36755092). During the conjugation reaction CdnD is transiently attached to AMP (PubMed:36755092, PubMed:36848932). Protein conjugation requires ATP (By similarity).</text>
</comment>
<comment type="function">
    <text evidence="2 3">Protects E.coli against phage T2 infection (PubMed:32544385). When the cdnD-cap2-cap3-cap4 operon is introduced in E.coli there is a more than 10(3) decrease in the efficiency of T2 plaque formation (PubMed:32544385, PubMed:36755092). The operon does not protect against phage T5 and only about 10-fold against T7 (PubMed:32544385).</text>
</comment>
<comment type="subunit">
    <text evidence="3">Crystallizes as a Cap2 homodimer bound on each side by a CdnD monomer (PubMed:36755092).</text>
</comment>
<comment type="induction">
    <text evidence="9">Part of a CBASS operon consisting of cap4-cdnD-cap2-cap3.</text>
</comment>
<comment type="domain">
    <text evidence="3">Has an N-terminal E2-like domain, a linker and a C-terminal adenylation plus E1-like domain, dimerizes via the E1-like domain (PubMed:36755092).</text>
</comment>
<comment type="disruption phenotype">
    <text evidence="3">Essential for CBASS function; when the operon missing this gene is introduced in E.coli it no longer protects against phages T2, T4, T5 or T6 (PubMed:36755092).</text>
</comment>
<comment type="miscellaneous">
    <text evidence="10">Has the E1 and E2 ubiquitin conjugation active sites and the adenylation site; Cap2 may recognize the target as well (PubMed:36755092).</text>
</comment>
<comment type="similarity">
    <text evidence="8">In the C-terminal section; belongs to the HesA/MoeB/ThiF family.</text>
</comment>
<proteinExistence type="evidence at protein level"/>
<keyword id="KW-0002">3D-structure</keyword>
<keyword id="KW-0051">Antiviral defense</keyword>
<keyword id="KW-1017">Isopeptide bond</keyword>
<keyword id="KW-0808">Transferase</keyword>
<gene>
    <name evidence="5" type="primary">cap2</name>
    <name evidence="11" type="ORF">P853_02263</name>
</gene>